<keyword id="KW-0028">Amino-acid biosynthesis</keyword>
<keyword id="KW-0486">Methionine biosynthesis</keyword>
<keyword id="KW-0663">Pyridoxal phosphate</keyword>
<keyword id="KW-0808">Transferase</keyword>
<accession>P94890</accession>
<proteinExistence type="evidence at protein level"/>
<gene>
    <name evidence="6" type="primary">metY</name>
</gene>
<feature type="chain" id="PRO_0000445419" description="O-acetyl-L-homoserine sulfhydrylase">
    <location>
        <begin position="1"/>
        <end position="442"/>
    </location>
</feature>
<feature type="region of interest" description="Disordered" evidence="2">
    <location>
        <begin position="1"/>
        <end position="32"/>
    </location>
</feature>
<feature type="modified residue" description="N6-(pyridoxal phosphate)lysine" evidence="1">
    <location>
        <position position="216"/>
    </location>
</feature>
<comment type="function">
    <text evidence="3 4">Catalyzes the conversion of O-acetyl-L-homoserine (OAH) into homocysteine in the methionine biosynthesis pathway (PubMed:12832650, PubMed:9440513). Can also use O-succinyl-homoserine (OSH), although at low efficiency (PubMed:12832650).</text>
</comment>
<comment type="catalytic activity">
    <reaction evidence="3 4">
        <text>O-acetyl-L-homoserine + hydrogen sulfide = L-homocysteine + acetate</text>
        <dbReference type="Rhea" id="RHEA:27822"/>
        <dbReference type="ChEBI" id="CHEBI:29919"/>
        <dbReference type="ChEBI" id="CHEBI:30089"/>
        <dbReference type="ChEBI" id="CHEBI:57716"/>
        <dbReference type="ChEBI" id="CHEBI:58199"/>
    </reaction>
</comment>
<comment type="cofactor">
    <cofactor evidence="1">
        <name>pyridoxal 5'-phosphate</name>
        <dbReference type="ChEBI" id="CHEBI:597326"/>
    </cofactor>
</comment>
<comment type="activity regulation">
    <text evidence="4">Feedback inhibited at very high concentrations of methionine or S-adenosylmethionine.</text>
</comment>
<comment type="pathway">
    <text evidence="9">Amino-acid biosynthesis; L-methionine biosynthesis via de novo pathway; L-homocysteine from O-acetyl-L-homoserine: step 1/1.</text>
</comment>
<comment type="similarity">
    <text evidence="8">Belongs to the trans-sulfuration enzymes family.</text>
</comment>
<dbReference type="EC" id="2.5.1.-" evidence="3 4"/>
<dbReference type="EMBL" id="Y10744">
    <property type="protein sequence ID" value="CAA71732.1"/>
    <property type="molecule type" value="Genomic_DNA"/>
</dbReference>
<dbReference type="PIR" id="T44655">
    <property type="entry name" value="T44655"/>
</dbReference>
<dbReference type="SMR" id="P94890"/>
<dbReference type="STRING" id="1193051.LEP1GSC017_3349"/>
<dbReference type="BioCyc" id="MetaCyc:MONOMER-9366"/>
<dbReference type="BRENDA" id="2.5.1.49">
    <property type="organism ID" value="2987"/>
</dbReference>
<dbReference type="UniPathway" id="UPA00051">
    <property type="reaction ID" value="UER00079"/>
</dbReference>
<dbReference type="GO" id="GO:0005737">
    <property type="term" value="C:cytoplasm"/>
    <property type="evidence" value="ECO:0007669"/>
    <property type="project" value="TreeGrafter"/>
</dbReference>
<dbReference type="GO" id="GO:0004124">
    <property type="term" value="F:cysteine synthase activity"/>
    <property type="evidence" value="ECO:0007669"/>
    <property type="project" value="TreeGrafter"/>
</dbReference>
<dbReference type="GO" id="GO:0051009">
    <property type="term" value="F:O-acetylhomoserine sulfhydrylase activity"/>
    <property type="evidence" value="ECO:0007669"/>
    <property type="project" value="RHEA"/>
</dbReference>
<dbReference type="GO" id="GO:0030170">
    <property type="term" value="F:pyridoxal phosphate binding"/>
    <property type="evidence" value="ECO:0007669"/>
    <property type="project" value="InterPro"/>
</dbReference>
<dbReference type="GO" id="GO:0006535">
    <property type="term" value="P:cysteine biosynthetic process from serine"/>
    <property type="evidence" value="ECO:0007669"/>
    <property type="project" value="TreeGrafter"/>
</dbReference>
<dbReference type="GO" id="GO:0071269">
    <property type="term" value="P:L-homocysteine biosynthetic process"/>
    <property type="evidence" value="ECO:0007669"/>
    <property type="project" value="TreeGrafter"/>
</dbReference>
<dbReference type="GO" id="GO:0019346">
    <property type="term" value="P:transsulfuration"/>
    <property type="evidence" value="ECO:0007669"/>
    <property type="project" value="InterPro"/>
</dbReference>
<dbReference type="CDD" id="cd00614">
    <property type="entry name" value="CGS_like"/>
    <property type="match status" value="1"/>
</dbReference>
<dbReference type="FunFam" id="3.40.640.10:FF:000035">
    <property type="entry name" value="O-succinylhomoserine sulfhydrylase"/>
    <property type="match status" value="1"/>
</dbReference>
<dbReference type="Gene3D" id="3.90.1150.10">
    <property type="entry name" value="Aspartate Aminotransferase, domain 1"/>
    <property type="match status" value="1"/>
</dbReference>
<dbReference type="Gene3D" id="3.40.640.10">
    <property type="entry name" value="Type I PLP-dependent aspartate aminotransferase-like (Major domain)"/>
    <property type="match status" value="1"/>
</dbReference>
<dbReference type="InterPro" id="IPR000277">
    <property type="entry name" value="Cys/Met-Metab_PyrdxlP-dep_enz"/>
</dbReference>
<dbReference type="InterPro" id="IPR054542">
    <property type="entry name" value="Cys_met_metab_PP"/>
</dbReference>
<dbReference type="InterPro" id="IPR006235">
    <property type="entry name" value="OAc-hSer/O-AcSer_sulfhydrylase"/>
</dbReference>
<dbReference type="InterPro" id="IPR015424">
    <property type="entry name" value="PyrdxlP-dep_Trfase"/>
</dbReference>
<dbReference type="InterPro" id="IPR015421">
    <property type="entry name" value="PyrdxlP-dep_Trfase_major"/>
</dbReference>
<dbReference type="InterPro" id="IPR015422">
    <property type="entry name" value="PyrdxlP-dep_Trfase_small"/>
</dbReference>
<dbReference type="NCBIfam" id="TIGR01326">
    <property type="entry name" value="OAH_OAS_sulfhy"/>
    <property type="match status" value="1"/>
</dbReference>
<dbReference type="PANTHER" id="PTHR43797">
    <property type="entry name" value="HOMOCYSTEINE/CYSTEINE SYNTHASE"/>
    <property type="match status" value="1"/>
</dbReference>
<dbReference type="PANTHER" id="PTHR43797:SF2">
    <property type="entry name" value="HOMOCYSTEINE_CYSTEINE SYNTHASE"/>
    <property type="match status" value="1"/>
</dbReference>
<dbReference type="Pfam" id="PF01053">
    <property type="entry name" value="Cys_Met_Meta_PP"/>
    <property type="match status" value="1"/>
</dbReference>
<dbReference type="PIRSF" id="PIRSF001434">
    <property type="entry name" value="CGS"/>
    <property type="match status" value="1"/>
</dbReference>
<dbReference type="SUPFAM" id="SSF53383">
    <property type="entry name" value="PLP-dependent transferases"/>
    <property type="match status" value="1"/>
</dbReference>
<dbReference type="PROSITE" id="PS00868">
    <property type="entry name" value="CYS_MET_METAB_PP"/>
    <property type="match status" value="1"/>
</dbReference>
<protein>
    <recommendedName>
        <fullName evidence="7">O-acetyl-L-homoserine sulfhydrylase</fullName>
        <shortName evidence="5">OAH-sulfhydrylase</shortName>
        <ecNumber evidence="3 4">2.5.1.-</ecNumber>
    </recommendedName>
</protein>
<sequence length="442" mass="47961">MVGPSGESMPRNFKPETIALHGGQEPDPTTTSRAVPLYQTTSYVFKDTDHAARLFGLQEFGNIYTRLMNPTTDVLEKRVAALEGGVAALATASGQSAEMLALLNIVEAGQEIVASSSLYGGTYNLLHYTFPKLGIKVHFVDQSDPENFRKASNDKTRAFYAETLGNPKLDTLDIAAVSKVAKEVGVPLVIDNTMPSPYLVNPLKHGADIVVHSLTKFLGGHGTSIGGIIIDGGSFNWGNGKFKNFTEPDPSYHGLKFWEVFGKFEPFGGVNIAFILKARVQGLRDLGPAISPFNAWQILQGVETLPLRMERHSGNALKVAEFLQKHPKIEWVNYPGLSTDKNYATAKKYHERGLFGAIVGFEIKGGVEKAKKFIDGLELFSLLANIGDAKSLAIHPASTTHQQLTGPEQISAGVTPGFVRLSVGLENIDDILVDLEEALKNI</sequence>
<evidence type="ECO:0000250" key="1">
    <source>
        <dbReference type="UniProtKB" id="Q5SK88"/>
    </source>
</evidence>
<evidence type="ECO:0000256" key="2">
    <source>
        <dbReference type="SAM" id="MobiDB-lite"/>
    </source>
</evidence>
<evidence type="ECO:0000269" key="3">
    <source>
    </source>
</evidence>
<evidence type="ECO:0000269" key="4">
    <source>
    </source>
</evidence>
<evidence type="ECO:0000303" key="5">
    <source>
    </source>
</evidence>
<evidence type="ECO:0000303" key="6">
    <source>
    </source>
</evidence>
<evidence type="ECO:0000303" key="7">
    <source>
    </source>
</evidence>
<evidence type="ECO:0000305" key="8"/>
<evidence type="ECO:0000305" key="9">
    <source>
    </source>
</evidence>
<organism>
    <name type="scientific">Leptospira meyeri</name>
    <dbReference type="NCBI Taxonomy" id="29508"/>
    <lineage>
        <taxon>Bacteria</taxon>
        <taxon>Pseudomonadati</taxon>
        <taxon>Spirochaetota</taxon>
        <taxon>Spirochaetia</taxon>
        <taxon>Leptospirales</taxon>
        <taxon>Leptospiraceae</taxon>
        <taxon>Leptospira</taxon>
    </lineage>
</organism>
<reference key="1">
    <citation type="journal article" date="1997" name="J. Bacteriol.">
        <title>Homoserine O-acetyltransferase, involved in the Leptospira meyeri methionine biosynthetic pathway, is not feedback inhibited.</title>
        <authorList>
            <person name="Bourhy P."/>
            <person name="Martel A."/>
            <person name="Margarita D."/>
            <person name="Saint Girons I."/>
            <person name="Belfaiza J."/>
        </authorList>
    </citation>
    <scope>NUCLEOTIDE SEQUENCE [GENOMIC DNA]</scope>
    <source>
        <strain>Serovar Semaranga / isolate Veldrat S 173</strain>
    </source>
</reference>
<reference key="2">
    <citation type="journal article" date="1998" name="J. Bacteriol.">
        <title>Direct sulfhydrylation for methionine biosynthesis in Leptospira meyeri.</title>
        <authorList>
            <person name="Belfaiza J."/>
            <person name="Martel A."/>
            <person name="Margarita D."/>
            <person name="Saint Girons I."/>
        </authorList>
    </citation>
    <scope>FUNCTION</scope>
    <scope>CATALYTIC ACTIVITY</scope>
    <scope>ACTIVITY REGULATION</scope>
    <scope>PATHWAY</scope>
    <source>
        <strain>Serovar Semaranga / isolate Veldrat S 173</strain>
    </source>
</reference>
<reference key="3">
    <citation type="journal article" date="2003" name="Mol. Biol. Evol.">
        <title>In vivo analysis of various substrates utilized by cystathionine gamma-synthase and O-acetylhomoserine sulfhydrylase in methionine biosynthesis.</title>
        <authorList>
            <person name="Hacham Y."/>
            <person name="Gophna U."/>
            <person name="Amir R."/>
        </authorList>
    </citation>
    <scope>FUNCTION</scope>
    <scope>CATALYTIC ACTIVITY</scope>
</reference>
<name>METY_LEPME</name>